<name>TCF23_HUMAN</name>
<protein>
    <recommendedName>
        <fullName>Transcription factor 23</fullName>
        <shortName>TCF-23</shortName>
    </recommendedName>
    <alternativeName>
        <fullName>Class A basic helix-loop-helix protein 24</fullName>
        <shortName>bHLHa24</shortName>
    </alternativeName>
</protein>
<reference key="1">
    <citation type="journal article" date="2005" name="Nature">
        <title>Generation and annotation of the DNA sequences of human chromosomes 2 and 4.</title>
        <authorList>
            <person name="Hillier L.W."/>
            <person name="Graves T.A."/>
            <person name="Fulton R.S."/>
            <person name="Fulton L.A."/>
            <person name="Pepin K.H."/>
            <person name="Minx P."/>
            <person name="Wagner-McPherson C."/>
            <person name="Layman D."/>
            <person name="Wylie K."/>
            <person name="Sekhon M."/>
            <person name="Becker M.C."/>
            <person name="Fewell G.A."/>
            <person name="Delehaunty K.D."/>
            <person name="Miner T.L."/>
            <person name="Nash W.E."/>
            <person name="Kremitzki C."/>
            <person name="Oddy L."/>
            <person name="Du H."/>
            <person name="Sun H."/>
            <person name="Bradshaw-Cordum H."/>
            <person name="Ali J."/>
            <person name="Carter J."/>
            <person name="Cordes M."/>
            <person name="Harris A."/>
            <person name="Isak A."/>
            <person name="van Brunt A."/>
            <person name="Nguyen C."/>
            <person name="Du F."/>
            <person name="Courtney L."/>
            <person name="Kalicki J."/>
            <person name="Ozersky P."/>
            <person name="Abbott S."/>
            <person name="Armstrong J."/>
            <person name="Belter E.A."/>
            <person name="Caruso L."/>
            <person name="Cedroni M."/>
            <person name="Cotton M."/>
            <person name="Davidson T."/>
            <person name="Desai A."/>
            <person name="Elliott G."/>
            <person name="Erb T."/>
            <person name="Fronick C."/>
            <person name="Gaige T."/>
            <person name="Haakenson W."/>
            <person name="Haglund K."/>
            <person name="Holmes A."/>
            <person name="Harkins R."/>
            <person name="Kim K."/>
            <person name="Kruchowski S.S."/>
            <person name="Strong C.M."/>
            <person name="Grewal N."/>
            <person name="Goyea E."/>
            <person name="Hou S."/>
            <person name="Levy A."/>
            <person name="Martinka S."/>
            <person name="Mead K."/>
            <person name="McLellan M.D."/>
            <person name="Meyer R."/>
            <person name="Randall-Maher J."/>
            <person name="Tomlinson C."/>
            <person name="Dauphin-Kohlberg S."/>
            <person name="Kozlowicz-Reilly A."/>
            <person name="Shah N."/>
            <person name="Swearengen-Shahid S."/>
            <person name="Snider J."/>
            <person name="Strong J.T."/>
            <person name="Thompson J."/>
            <person name="Yoakum M."/>
            <person name="Leonard S."/>
            <person name="Pearman C."/>
            <person name="Trani L."/>
            <person name="Radionenko M."/>
            <person name="Waligorski J.E."/>
            <person name="Wang C."/>
            <person name="Rock S.M."/>
            <person name="Tin-Wollam A.-M."/>
            <person name="Maupin R."/>
            <person name="Latreille P."/>
            <person name="Wendl M.C."/>
            <person name="Yang S.-P."/>
            <person name="Pohl C."/>
            <person name="Wallis J.W."/>
            <person name="Spieth J."/>
            <person name="Bieri T.A."/>
            <person name="Berkowicz N."/>
            <person name="Nelson J.O."/>
            <person name="Osborne J."/>
            <person name="Ding L."/>
            <person name="Meyer R."/>
            <person name="Sabo A."/>
            <person name="Shotland Y."/>
            <person name="Sinha P."/>
            <person name="Wohldmann P.E."/>
            <person name="Cook L.L."/>
            <person name="Hickenbotham M.T."/>
            <person name="Eldred J."/>
            <person name="Williams D."/>
            <person name="Jones T.A."/>
            <person name="She X."/>
            <person name="Ciccarelli F.D."/>
            <person name="Izaurralde E."/>
            <person name="Taylor J."/>
            <person name="Schmutz J."/>
            <person name="Myers R.M."/>
            <person name="Cox D.R."/>
            <person name="Huang X."/>
            <person name="McPherson J.D."/>
            <person name="Mardis E.R."/>
            <person name="Clifton S.W."/>
            <person name="Warren W.C."/>
            <person name="Chinwalla A.T."/>
            <person name="Eddy S.R."/>
            <person name="Marra M.A."/>
            <person name="Ovcharenko I."/>
            <person name="Furey T.S."/>
            <person name="Miller W."/>
            <person name="Eichler E.E."/>
            <person name="Bork P."/>
            <person name="Suyama M."/>
            <person name="Torrents D."/>
            <person name="Waterston R.H."/>
            <person name="Wilson R.K."/>
        </authorList>
    </citation>
    <scope>NUCLEOTIDE SEQUENCE [LARGE SCALE GENOMIC DNA]</scope>
</reference>
<reference key="2">
    <citation type="journal article" date="2004" name="Genome Res.">
        <title>The status, quality, and expansion of the NIH full-length cDNA project: the Mammalian Gene Collection (MGC).</title>
        <authorList>
            <consortium name="The MGC Project Team"/>
        </authorList>
    </citation>
    <scope>NUCLEOTIDE SEQUENCE [LARGE SCALE MRNA]</scope>
</reference>
<reference key="3">
    <citation type="journal article" date="2002" name="Mech. Dev.">
        <title>Exhaustive identification of human class II basic helix-loop-helix proteins by virtual library screening.</title>
        <authorList>
            <person name="McLellan A.S."/>
            <person name="Langlands K."/>
            <person name="Kealey T."/>
        </authorList>
    </citation>
    <scope>IDENTIFICATION</scope>
    <scope>TISSUE SPECIFICITY</scope>
</reference>
<evidence type="ECO:0000250" key="1"/>
<evidence type="ECO:0000255" key="2">
    <source>
        <dbReference type="PROSITE-ProRule" id="PRU00981"/>
    </source>
</evidence>
<evidence type="ECO:0000256" key="3">
    <source>
        <dbReference type="SAM" id="MobiDB-lite"/>
    </source>
</evidence>
<evidence type="ECO:0000269" key="4">
    <source>
    </source>
</evidence>
<comment type="function">
    <text evidence="1">Inhibits E-box-mediated binding and transactivation of bHLH factors. Inhibitory effect is similar to that of ID proteins. Inhibits the formation of TCF3 and MYOD1 homodimers and heterodimers. Lacks DNA binding activity. Seems to play a role in the inhibition of myogenesis (By similarity).</text>
</comment>
<comment type="subunit">
    <text evidence="1">Forms inactive heterodimeric complexes with TCF3.</text>
</comment>
<comment type="interaction">
    <interactant intactId="EBI-12127592">
        <id>Q7RTU1</id>
    </interactant>
    <interactant intactId="EBI-489887">
        <id>P50402</id>
        <label>EMD</label>
    </interactant>
    <organismsDiffer>false</organismsDiffer>
    <experiments>3</experiments>
</comment>
<comment type="interaction">
    <interactant intactId="EBI-12127592">
        <id>Q7RTU1</id>
    </interactant>
    <interactant intactId="EBI-11976617">
        <id>Q6QHK4</id>
        <label>FIGLA</label>
    </interactant>
    <organismsDiffer>false</organismsDiffer>
    <experiments>3</experiments>
</comment>
<comment type="interaction">
    <interactant intactId="EBI-12127592">
        <id>Q7RTU1</id>
    </interactant>
    <interactant intactId="EBI-7060731">
        <id>P61978-2</id>
        <label>HNRNPK</label>
    </interactant>
    <organismsDiffer>false</organismsDiffer>
    <experiments>3</experiments>
</comment>
<comment type="interaction">
    <interactant intactId="EBI-12127592">
        <id>Q7RTU1</id>
    </interactant>
    <interactant intactId="EBI-11952764">
        <id>Q99081-3</id>
        <label>TCF12</label>
    </interactant>
    <organismsDiffer>false</organismsDiffer>
    <experiments>3</experiments>
</comment>
<comment type="interaction">
    <interactant intactId="EBI-12127592">
        <id>Q7RTU1</id>
    </interactant>
    <interactant intactId="EBI-13636688">
        <id>P15884-3</id>
        <label>TCF4</label>
    </interactant>
    <organismsDiffer>false</organismsDiffer>
    <experiments>3</experiments>
</comment>
<comment type="interaction">
    <interactant intactId="EBI-12127592">
        <id>Q7RTU1</id>
    </interactant>
    <interactant intactId="EBI-11097439">
        <id>P26368-2</id>
        <label>U2AF2</label>
    </interactant>
    <organismsDiffer>false</organismsDiffer>
    <experiments>3</experiments>
</comment>
<comment type="subcellular location">
    <subcellularLocation>
        <location evidence="2">Nucleus</location>
    </subcellularLocation>
</comment>
<comment type="tissue specificity">
    <text evidence="4">Expressed in liver, kidney and spleen.</text>
</comment>
<comment type="domain">
    <text evidence="1">Both the bHLH region and the C-terminal portion are essential for inhibitory function.</text>
</comment>
<gene>
    <name type="primary">TCF23</name>
    <name type="synonym">BHLHA24</name>
</gene>
<keyword id="KW-0217">Developmental protein</keyword>
<keyword id="KW-0221">Differentiation</keyword>
<keyword id="KW-0517">Myogenesis</keyword>
<keyword id="KW-0539">Nucleus</keyword>
<keyword id="KW-1267">Proteomics identification</keyword>
<keyword id="KW-1185">Reference proteome</keyword>
<feature type="chain" id="PRO_0000315820" description="Transcription factor 23">
    <location>
        <begin position="1"/>
        <end position="214"/>
    </location>
</feature>
<feature type="domain" description="bHLH" evidence="2">
    <location>
        <begin position="76"/>
        <end position="128"/>
    </location>
</feature>
<feature type="region of interest" description="Disordered" evidence="3">
    <location>
        <begin position="1"/>
        <end position="86"/>
    </location>
</feature>
<feature type="region of interest" description="Disordered" evidence="3">
    <location>
        <begin position="174"/>
        <end position="214"/>
    </location>
</feature>
<feature type="compositionally biased region" description="Basic and acidic residues" evidence="3">
    <location>
        <begin position="40"/>
        <end position="49"/>
    </location>
</feature>
<feature type="compositionally biased region" description="Polar residues" evidence="3">
    <location>
        <begin position="174"/>
        <end position="183"/>
    </location>
</feature>
<feature type="sequence variant" id="VAR_038325" description="In dbSNP:rs11126879.">
    <original>R</original>
    <variation>Q</variation>
    <location>
        <position position="25"/>
    </location>
</feature>
<feature type="sequence variant" id="VAR_038326" description="In dbSNP:rs4502371.">
    <original>T</original>
    <variation>S</variation>
    <location>
        <position position="40"/>
    </location>
</feature>
<proteinExistence type="evidence at protein level"/>
<sequence length="214" mass="23309">MSQRKARGPPAMPGVGHSQTQAKARLLPGADRKRSRLSRTRQDPWEERSWSNQRWSRATPGPRGTRAGGLALGRSEASPENAARERSRVRTLRQAFLALQAALPAVPPDTKLSKLDVLVLAASYIAHLTRTLGHELPGPAWPPFLRGLRYLHPLKKWPMRSRLYAGGLGYSDLDSTTASTPSQRTRDAEVGSQVPGEADALLSTTPLSPALGDK</sequence>
<organism>
    <name type="scientific">Homo sapiens</name>
    <name type="common">Human</name>
    <dbReference type="NCBI Taxonomy" id="9606"/>
    <lineage>
        <taxon>Eukaryota</taxon>
        <taxon>Metazoa</taxon>
        <taxon>Chordata</taxon>
        <taxon>Craniata</taxon>
        <taxon>Vertebrata</taxon>
        <taxon>Euteleostomi</taxon>
        <taxon>Mammalia</taxon>
        <taxon>Eutheria</taxon>
        <taxon>Euarchontoglires</taxon>
        <taxon>Primates</taxon>
        <taxon>Haplorrhini</taxon>
        <taxon>Catarrhini</taxon>
        <taxon>Hominidae</taxon>
        <taxon>Homo</taxon>
    </lineage>
</organism>
<accession>Q7RTU1</accession>
<accession>B2RNZ3</accession>
<dbReference type="EMBL" id="AC013403">
    <property type="status" value="NOT_ANNOTATED_CDS"/>
    <property type="molecule type" value="Genomic_DNA"/>
</dbReference>
<dbReference type="EMBL" id="BC137191">
    <property type="protein sequence ID" value="AAI37192.1"/>
    <property type="molecule type" value="mRNA"/>
</dbReference>
<dbReference type="EMBL" id="BC137192">
    <property type="protein sequence ID" value="AAI37193.1"/>
    <property type="molecule type" value="mRNA"/>
</dbReference>
<dbReference type="EMBL" id="BK000143">
    <property type="protein sequence ID" value="DAA00305.1"/>
    <property type="molecule type" value="Genomic_DNA"/>
</dbReference>
<dbReference type="CCDS" id="CCDS33163.1"/>
<dbReference type="RefSeq" id="NP_786951.1">
    <property type="nucleotide sequence ID" value="NM_175769.3"/>
</dbReference>
<dbReference type="SMR" id="Q7RTU1"/>
<dbReference type="BioGRID" id="127330">
    <property type="interactions" value="11"/>
</dbReference>
<dbReference type="FunCoup" id="Q7RTU1">
    <property type="interactions" value="185"/>
</dbReference>
<dbReference type="IntAct" id="Q7RTU1">
    <property type="interactions" value="9"/>
</dbReference>
<dbReference type="STRING" id="9606.ENSP00000296096"/>
<dbReference type="GlyGen" id="Q7RTU1">
    <property type="glycosylation" value="1 site"/>
</dbReference>
<dbReference type="iPTMnet" id="Q7RTU1"/>
<dbReference type="PhosphoSitePlus" id="Q7RTU1"/>
<dbReference type="BioMuta" id="TCF23"/>
<dbReference type="DMDM" id="74749939"/>
<dbReference type="MassIVE" id="Q7RTU1"/>
<dbReference type="PaxDb" id="9606-ENSP00000296096"/>
<dbReference type="PeptideAtlas" id="Q7RTU1"/>
<dbReference type="ProteomicsDB" id="68905"/>
<dbReference type="Antibodypedia" id="47343">
    <property type="antibodies" value="25 antibodies from 11 providers"/>
</dbReference>
<dbReference type="DNASU" id="150921"/>
<dbReference type="Ensembl" id="ENST00000296096.6">
    <property type="protein sequence ID" value="ENSP00000296096.5"/>
    <property type="gene ID" value="ENSG00000163792.6"/>
</dbReference>
<dbReference type="GeneID" id="150921"/>
<dbReference type="KEGG" id="hsa:150921"/>
<dbReference type="MANE-Select" id="ENST00000296096.6">
    <property type="protein sequence ID" value="ENSP00000296096.5"/>
    <property type="RefSeq nucleotide sequence ID" value="NM_175769.3"/>
    <property type="RefSeq protein sequence ID" value="NP_786951.1"/>
</dbReference>
<dbReference type="UCSC" id="uc010ylg.3">
    <property type="organism name" value="human"/>
</dbReference>
<dbReference type="AGR" id="HGNC:18602"/>
<dbReference type="CTD" id="150921"/>
<dbReference type="GeneCards" id="TCF23"/>
<dbReference type="HGNC" id="HGNC:18602">
    <property type="gene designation" value="TCF23"/>
</dbReference>
<dbReference type="HPA" id="ENSG00000163792">
    <property type="expression patterns" value="Group enriched (endometrium, fallopian tube, ovary, smooth muscle)"/>
</dbReference>
<dbReference type="MIM" id="609635">
    <property type="type" value="gene"/>
</dbReference>
<dbReference type="neXtProt" id="NX_Q7RTU1"/>
<dbReference type="PharmGKB" id="PA38359"/>
<dbReference type="VEuPathDB" id="HostDB:ENSG00000163792"/>
<dbReference type="eggNOG" id="KOG4029">
    <property type="taxonomic scope" value="Eukaryota"/>
</dbReference>
<dbReference type="GeneTree" id="ENSGT00940000161395"/>
<dbReference type="HOGENOM" id="CLU_101416_1_0_1"/>
<dbReference type="InParanoid" id="Q7RTU1"/>
<dbReference type="OMA" id="RTRQDLW"/>
<dbReference type="OrthoDB" id="10063436at2759"/>
<dbReference type="PAN-GO" id="Q7RTU1">
    <property type="GO annotations" value="4 GO annotations based on evolutionary models"/>
</dbReference>
<dbReference type="PhylomeDB" id="Q7RTU1"/>
<dbReference type="TreeFam" id="TF350742"/>
<dbReference type="PathwayCommons" id="Q7RTU1"/>
<dbReference type="SignaLink" id="Q7RTU1"/>
<dbReference type="BioGRID-ORCS" id="150921">
    <property type="hits" value="11 hits in 1163 CRISPR screens"/>
</dbReference>
<dbReference type="GenomeRNAi" id="150921"/>
<dbReference type="Pharos" id="Q7RTU1">
    <property type="development level" value="Tbio"/>
</dbReference>
<dbReference type="PRO" id="PR:Q7RTU1"/>
<dbReference type="Proteomes" id="UP000005640">
    <property type="component" value="Chromosome 2"/>
</dbReference>
<dbReference type="RNAct" id="Q7RTU1">
    <property type="molecule type" value="protein"/>
</dbReference>
<dbReference type="Bgee" id="ENSG00000163792">
    <property type="expression patterns" value="Expressed in body of uterus and 44 other cell types or tissues"/>
</dbReference>
<dbReference type="GO" id="GO:0000785">
    <property type="term" value="C:chromatin"/>
    <property type="evidence" value="ECO:0000247"/>
    <property type="project" value="NTNU_SB"/>
</dbReference>
<dbReference type="GO" id="GO:0000791">
    <property type="term" value="C:euchromatin"/>
    <property type="evidence" value="ECO:0000250"/>
    <property type="project" value="ARUK-UCL"/>
</dbReference>
<dbReference type="GO" id="GO:0005634">
    <property type="term" value="C:nucleus"/>
    <property type="evidence" value="ECO:0007669"/>
    <property type="project" value="UniProtKB-SubCell"/>
</dbReference>
<dbReference type="GO" id="GO:0000981">
    <property type="term" value="F:DNA-binding transcription factor activity, RNA polymerase II-specific"/>
    <property type="evidence" value="ECO:0000247"/>
    <property type="project" value="NTNU_SB"/>
</dbReference>
<dbReference type="GO" id="GO:0046983">
    <property type="term" value="F:protein dimerization activity"/>
    <property type="evidence" value="ECO:0007669"/>
    <property type="project" value="InterPro"/>
</dbReference>
<dbReference type="GO" id="GO:0000977">
    <property type="term" value="F:RNA polymerase II transcription regulatory region sequence-specific DNA binding"/>
    <property type="evidence" value="ECO:0000318"/>
    <property type="project" value="GO_Central"/>
</dbReference>
<dbReference type="GO" id="GO:0061629">
    <property type="term" value="F:RNA polymerase II-specific DNA-binding transcription factor binding"/>
    <property type="evidence" value="ECO:0000250"/>
    <property type="project" value="ARUK-UCL"/>
</dbReference>
<dbReference type="GO" id="GO:0140416">
    <property type="term" value="F:transcription regulator inhibitor activity"/>
    <property type="evidence" value="ECO:0000250"/>
    <property type="project" value="ARUK-UCL"/>
</dbReference>
<dbReference type="GO" id="GO:0030154">
    <property type="term" value="P:cell differentiation"/>
    <property type="evidence" value="ECO:0007669"/>
    <property type="project" value="UniProtKB-KW"/>
</dbReference>
<dbReference type="GO" id="GO:0046697">
    <property type="term" value="P:decidualization"/>
    <property type="evidence" value="ECO:0000315"/>
    <property type="project" value="MGI"/>
</dbReference>
<dbReference type="GO" id="GO:0032502">
    <property type="term" value="P:developmental process"/>
    <property type="evidence" value="ECO:0000318"/>
    <property type="project" value="GO_Central"/>
</dbReference>
<dbReference type="GO" id="GO:0007517">
    <property type="term" value="P:muscle organ development"/>
    <property type="evidence" value="ECO:0007669"/>
    <property type="project" value="UniProtKB-KW"/>
</dbReference>
<dbReference type="GO" id="GO:0051148">
    <property type="term" value="P:negative regulation of muscle cell differentiation"/>
    <property type="evidence" value="ECO:0000250"/>
    <property type="project" value="ARUK-UCL"/>
</dbReference>
<dbReference type="GO" id="GO:0000122">
    <property type="term" value="P:negative regulation of transcription by RNA polymerase II"/>
    <property type="evidence" value="ECO:0000250"/>
    <property type="project" value="ARUK-UCL"/>
</dbReference>
<dbReference type="GO" id="GO:0010628">
    <property type="term" value="P:positive regulation of gene expression"/>
    <property type="evidence" value="ECO:0000315"/>
    <property type="project" value="MGI"/>
</dbReference>
<dbReference type="GO" id="GO:0006357">
    <property type="term" value="P:regulation of transcription by RNA polymerase II"/>
    <property type="evidence" value="ECO:0000318"/>
    <property type="project" value="GO_Central"/>
</dbReference>
<dbReference type="Gene3D" id="4.10.280.10">
    <property type="entry name" value="Helix-loop-helix DNA-binding domain"/>
    <property type="match status" value="1"/>
</dbReference>
<dbReference type="InterPro" id="IPR011598">
    <property type="entry name" value="bHLH_dom"/>
</dbReference>
<dbReference type="InterPro" id="IPR050283">
    <property type="entry name" value="E-box_TF_Regulators"/>
</dbReference>
<dbReference type="InterPro" id="IPR036638">
    <property type="entry name" value="HLH_DNA-bd_sf"/>
</dbReference>
<dbReference type="PANTHER" id="PTHR23349">
    <property type="entry name" value="BASIC HELIX-LOOP-HELIX TRANSCRIPTION FACTOR, TWIST"/>
    <property type="match status" value="1"/>
</dbReference>
<dbReference type="PANTHER" id="PTHR23349:SF58">
    <property type="entry name" value="TRANSCRIPTION FACTOR 23"/>
    <property type="match status" value="1"/>
</dbReference>
<dbReference type="Pfam" id="PF00010">
    <property type="entry name" value="HLH"/>
    <property type="match status" value="1"/>
</dbReference>
<dbReference type="SMART" id="SM00353">
    <property type="entry name" value="HLH"/>
    <property type="match status" value="1"/>
</dbReference>
<dbReference type="SUPFAM" id="SSF47459">
    <property type="entry name" value="HLH, helix-loop-helix DNA-binding domain"/>
    <property type="match status" value="1"/>
</dbReference>
<dbReference type="PROSITE" id="PS50888">
    <property type="entry name" value="BHLH"/>
    <property type="match status" value="1"/>
</dbReference>